<sequence length="412" mass="46011">MSKIKESSSGILGASNNTNKESSQKSARSIALPMTYALIGVSCLNVWNSALGLNIKITYNIFQMAGLLTSSVLALFVNYPRVLLPTSLGVLTLLCAGFQIAHQTFSDSAFDTYCLAAFITIGLMAGIAQTIAFAIGTTKESNMSGYISAGIGMSGVLIFCINLILDYIVSDEKIYEINKSKLLCLFSISEIFLIITIVCCVLYIDLFPKNDNNKDSTDIEKAEEKEGRLPLIEIIKDGYKAILSIFLVNWLSLQLFPGIGHKKWQEKHGMTDNNVTIIVGMFQVFDFISRYPPNFTHIKIFKYFTFSLNTLLIGNFLRLLFIPWFVLNAVISSSFFTNIVQQCVCIAALAFTNGWFNTVPFIVFVKELKKVKHQKDIETISRIMVVSLFFGLFFGMLTTCLYDYFPIGILNN</sequence>
<organism evidence="8">
    <name type="scientific">Plasmodium berghei (strain Anka)</name>
    <dbReference type="NCBI Taxonomy" id="5823"/>
    <lineage>
        <taxon>Eukaryota</taxon>
        <taxon>Sar</taxon>
        <taxon>Alveolata</taxon>
        <taxon>Apicomplexa</taxon>
        <taxon>Aconoidasida</taxon>
        <taxon>Haemosporida</taxon>
        <taxon>Plasmodiidae</taxon>
        <taxon>Plasmodium</taxon>
        <taxon>Plasmodium (Vinckeia)</taxon>
    </lineage>
</organism>
<accession>A0A509AYF4</accession>
<dbReference type="EMBL" id="LK023128">
    <property type="protein sequence ID" value="VUC57988.1"/>
    <property type="molecule type" value="Genomic_DNA"/>
</dbReference>
<dbReference type="RefSeq" id="XP_034423757.1">
    <property type="nucleotide sequence ID" value="XM_034567240.1"/>
</dbReference>
<dbReference type="SMR" id="A0A509AYF4"/>
<dbReference type="STRING" id="5823.A0A509AYF4"/>
<dbReference type="GeneID" id="55151957"/>
<dbReference type="VEuPathDB" id="PlasmoDB:PBANKA_1360100"/>
<dbReference type="InParanoid" id="A0A509AYF4"/>
<dbReference type="OMA" id="MGIWTTY"/>
<dbReference type="Proteomes" id="UP000074855">
    <property type="component" value="Chromosome 13"/>
</dbReference>
<dbReference type="GO" id="GO:0005886">
    <property type="term" value="C:plasma membrane"/>
    <property type="evidence" value="ECO:0007669"/>
    <property type="project" value="UniProtKB-SubCell"/>
</dbReference>
<dbReference type="GO" id="GO:0005337">
    <property type="term" value="F:nucleoside transmembrane transporter activity"/>
    <property type="evidence" value="ECO:0007669"/>
    <property type="project" value="InterPro"/>
</dbReference>
<dbReference type="InterPro" id="IPR002259">
    <property type="entry name" value="Eqnu_transpt"/>
</dbReference>
<dbReference type="InterPro" id="IPR036259">
    <property type="entry name" value="MFS_trans_sf"/>
</dbReference>
<dbReference type="PANTHER" id="PTHR10332">
    <property type="entry name" value="EQUILIBRATIVE NUCLEOSIDE TRANSPORTER"/>
    <property type="match status" value="1"/>
</dbReference>
<dbReference type="PANTHER" id="PTHR10332:SF10">
    <property type="entry name" value="EQUILIBRATIVE NUCLEOSIDE TRANSPORTER 4"/>
    <property type="match status" value="1"/>
</dbReference>
<dbReference type="SUPFAM" id="SSF103473">
    <property type="entry name" value="MFS general substrate transporter"/>
    <property type="match status" value="1"/>
</dbReference>
<comment type="function">
    <text evidence="4">Nucleoside and nucleobase transporter with a broad substrate specificity.</text>
</comment>
<comment type="catalytic activity">
    <reaction evidence="1">
        <text>inosine(in) = inosine(out)</text>
        <dbReference type="Rhea" id="RHEA:75375"/>
        <dbReference type="ChEBI" id="CHEBI:17596"/>
    </reaction>
    <physiologicalReaction direction="right-to-left" evidence="1">
        <dbReference type="Rhea" id="RHEA:75377"/>
    </physiologicalReaction>
</comment>
<comment type="catalytic activity">
    <reaction evidence="4">
        <text>adenosine(in) = adenosine(out)</text>
        <dbReference type="Rhea" id="RHEA:75343"/>
        <dbReference type="ChEBI" id="CHEBI:16335"/>
    </reaction>
    <physiologicalReaction direction="right-to-left" evidence="1">
        <dbReference type="Rhea" id="RHEA:75345"/>
    </physiologicalReaction>
</comment>
<comment type="catalytic activity">
    <reaction evidence="1">
        <text>hypoxanthine(out) = hypoxanthine(in)</text>
        <dbReference type="Rhea" id="RHEA:71515"/>
        <dbReference type="ChEBI" id="CHEBI:17368"/>
    </reaction>
</comment>
<comment type="catalytic activity">
    <reaction evidence="1">
        <text>guanosine(in) = guanosine(out)</text>
        <dbReference type="Rhea" id="RHEA:75371"/>
        <dbReference type="ChEBI" id="CHEBI:16750"/>
    </reaction>
    <physiologicalReaction direction="right-to-left" evidence="1">
        <dbReference type="Rhea" id="RHEA:75373"/>
    </physiologicalReaction>
</comment>
<comment type="catalytic activity">
    <reaction evidence="1">
        <text>guanine(out) = guanine(in)</text>
        <dbReference type="Rhea" id="RHEA:71531"/>
        <dbReference type="ChEBI" id="CHEBI:16235"/>
    </reaction>
</comment>
<comment type="catalytic activity">
    <reaction evidence="1">
        <text>thymidine(in) = thymidine(out)</text>
        <dbReference type="Rhea" id="RHEA:75363"/>
        <dbReference type="ChEBI" id="CHEBI:17748"/>
    </reaction>
    <physiologicalReaction direction="right-to-left" evidence="1">
        <dbReference type="Rhea" id="RHEA:75365"/>
    </physiologicalReaction>
</comment>
<comment type="catalytic activity">
    <reaction evidence="4">
        <text>uridine(out) = uridine(in)</text>
        <dbReference type="Rhea" id="RHEA:71519"/>
        <dbReference type="ChEBI" id="CHEBI:16704"/>
    </reaction>
</comment>
<comment type="catalytic activity">
    <reaction evidence="1">
        <text>uracil(in) = uracil(out)</text>
        <dbReference type="Rhea" id="RHEA:69404"/>
        <dbReference type="ChEBI" id="CHEBI:17568"/>
    </reaction>
    <physiologicalReaction direction="right-to-left" evidence="1">
        <dbReference type="Rhea" id="RHEA:69406"/>
    </physiologicalReaction>
</comment>
<comment type="catalytic activity">
    <reaction evidence="1">
        <text>thymine(out) = thymine(in)</text>
        <dbReference type="Rhea" id="RHEA:71527"/>
        <dbReference type="ChEBI" id="CHEBI:17821"/>
    </reaction>
</comment>
<comment type="catalytic activity">
    <reaction evidence="1">
        <text>adenine(out) = adenine(in)</text>
        <dbReference type="Rhea" id="RHEA:71523"/>
        <dbReference type="ChEBI" id="CHEBI:16708"/>
    </reaction>
</comment>
<comment type="catalytic activity">
    <reaction evidence="1">
        <text>cytosine(out) = cytosine(in)</text>
        <dbReference type="Rhea" id="RHEA:76639"/>
        <dbReference type="ChEBI" id="CHEBI:16040"/>
    </reaction>
</comment>
<comment type="catalytic activity">
    <reaction evidence="1">
        <text>xanthine(out) = xanthine(in)</text>
        <dbReference type="Rhea" id="RHEA:76643"/>
        <dbReference type="ChEBI" id="CHEBI:17712"/>
    </reaction>
</comment>
<comment type="subcellular location">
    <subcellularLocation>
        <location evidence="1">Cell membrane</location>
        <topology evidence="2">Multi-pass membrane protein</topology>
    </subcellularLocation>
</comment>
<comment type="similarity">
    <text evidence="6">Belongs to the SLC29A/ENT transporter (TC 2.A.57) family.</text>
</comment>
<keyword id="KW-1003">Cell membrane</keyword>
<keyword id="KW-0472">Membrane</keyword>
<keyword id="KW-1185">Reference proteome</keyword>
<keyword id="KW-0812">Transmembrane</keyword>
<keyword id="KW-1133">Transmembrane helix</keyword>
<keyword id="KW-0813">Transport</keyword>
<protein>
    <recommendedName>
        <fullName evidence="7">Nucleoside transporter 1</fullName>
    </recommendedName>
    <alternativeName>
        <fullName evidence="5">Equilibrative Nucleoside Transporter Type 1</fullName>
        <shortName evidence="5">PbENT1</shortName>
    </alternativeName>
</protein>
<evidence type="ECO:0000250" key="1">
    <source>
        <dbReference type="UniProtKB" id="Q8IDM6"/>
    </source>
</evidence>
<evidence type="ECO:0000255" key="2"/>
<evidence type="ECO:0000256" key="3">
    <source>
        <dbReference type="SAM" id="MobiDB-lite"/>
    </source>
</evidence>
<evidence type="ECO:0000269" key="4">
    <source>
    </source>
</evidence>
<evidence type="ECO:0000303" key="5">
    <source>
    </source>
</evidence>
<evidence type="ECO:0000305" key="6"/>
<evidence type="ECO:0000312" key="7">
    <source>
        <dbReference type="EMBL" id="VUC57988.1"/>
    </source>
</evidence>
<evidence type="ECO:0000312" key="8">
    <source>
        <dbReference type="Proteomes" id="UP000074855"/>
    </source>
</evidence>
<name>ENT1_PLABA</name>
<proteinExistence type="inferred from homology"/>
<gene>
    <name evidence="7" type="ORF">PBANKA_1360100</name>
</gene>
<feature type="chain" id="PRO_0000461082" description="Nucleoside transporter 1">
    <location>
        <begin position="1"/>
        <end position="412"/>
    </location>
</feature>
<feature type="topological domain" description="Cytoplasmic" evidence="6">
    <location>
        <begin position="1"/>
        <end position="29"/>
    </location>
</feature>
<feature type="transmembrane region" description="Helical" evidence="2">
    <location>
        <begin position="30"/>
        <end position="50"/>
    </location>
</feature>
<feature type="topological domain" description="Extracellular" evidence="6">
    <location>
        <begin position="51"/>
        <end position="56"/>
    </location>
</feature>
<feature type="transmembrane region" description="Helical" evidence="2">
    <location>
        <begin position="57"/>
        <end position="77"/>
    </location>
</feature>
<feature type="topological domain" description="Cytoplasmic" evidence="6">
    <location>
        <begin position="78"/>
        <end position="81"/>
    </location>
</feature>
<feature type="transmembrane region" description="Helical" evidence="2">
    <location>
        <begin position="82"/>
        <end position="102"/>
    </location>
</feature>
<feature type="topological domain" description="Extracellular" evidence="6">
    <location>
        <begin position="103"/>
        <end position="114"/>
    </location>
</feature>
<feature type="transmembrane region" description="Helical" evidence="2">
    <location>
        <begin position="115"/>
        <end position="135"/>
    </location>
</feature>
<feature type="topological domain" description="Cytoplasmic" evidence="6">
    <location>
        <begin position="136"/>
        <end position="144"/>
    </location>
</feature>
<feature type="transmembrane region" description="Helical" evidence="2">
    <location>
        <begin position="145"/>
        <end position="165"/>
    </location>
</feature>
<feature type="topological domain" description="Extracellular" evidence="6">
    <location>
        <begin position="166"/>
        <end position="181"/>
    </location>
</feature>
<feature type="transmembrane region" description="Helical" evidence="2">
    <location>
        <begin position="182"/>
        <end position="202"/>
    </location>
</feature>
<feature type="topological domain" description="Cytoplasmic" evidence="6">
    <location>
        <begin position="203"/>
        <end position="240"/>
    </location>
</feature>
<feature type="transmembrane region" description="Helical" evidence="2">
    <location>
        <begin position="241"/>
        <end position="261"/>
    </location>
</feature>
<feature type="topological domain" description="Extracellular" evidence="6">
    <location>
        <begin position="262"/>
        <end position="271"/>
    </location>
</feature>
<feature type="transmembrane region" description="Helical" evidence="6">
    <location>
        <begin position="272"/>
        <end position="294"/>
    </location>
</feature>
<feature type="topological domain" description="Cytoplasmic" evidence="6">
    <location>
        <begin position="295"/>
        <end position="310"/>
    </location>
</feature>
<feature type="transmembrane region" description="Helical" evidence="2">
    <location>
        <begin position="311"/>
        <end position="331"/>
    </location>
</feature>
<feature type="topological domain" description="Extracellular" evidence="6">
    <location>
        <begin position="332"/>
        <end position="343"/>
    </location>
</feature>
<feature type="transmembrane region" description="Helical" evidence="2">
    <location>
        <begin position="344"/>
        <end position="364"/>
    </location>
</feature>
<feature type="topological domain" description="Cytoplasmic" evidence="6">
    <location>
        <begin position="365"/>
        <end position="382"/>
    </location>
</feature>
<feature type="transmembrane region" description="Helical" evidence="2">
    <location>
        <begin position="383"/>
        <end position="403"/>
    </location>
</feature>
<feature type="topological domain" description="Extracellular" evidence="6">
    <location>
        <begin position="404"/>
        <end position="412"/>
    </location>
</feature>
<feature type="region of interest" description="Disordered" evidence="3">
    <location>
        <begin position="1"/>
        <end position="21"/>
    </location>
</feature>
<feature type="compositionally biased region" description="Polar residues" evidence="3">
    <location>
        <begin position="7"/>
        <end position="21"/>
    </location>
</feature>
<reference evidence="8" key="1">
    <citation type="journal article" date="2014" name="BMC Biol.">
        <title>A comprehensive evaluation of rodent malaria parasite genomes and gene expression.</title>
        <authorList>
            <person name="Otto T.D."/>
            <person name="Bohme U."/>
            <person name="Jackson A.P."/>
            <person name="Hunt M."/>
            <person name="Franke-Fayard B."/>
            <person name="Hoeijmakers W.A."/>
            <person name="Religa A.A."/>
            <person name="Robertson L."/>
            <person name="Sanders M."/>
            <person name="Ogun S.A."/>
            <person name="Cunningham D."/>
            <person name="Erhart A."/>
            <person name="Billker O."/>
            <person name="Khan S.M."/>
            <person name="Stunnenberg H.G."/>
            <person name="Langhorne J."/>
            <person name="Holder A.A."/>
            <person name="Waters A.P."/>
            <person name="Newbold C.I."/>
            <person name="Pain A."/>
            <person name="Berriman M."/>
            <person name="Janse C.J."/>
        </authorList>
    </citation>
    <scope>NUCLEOTIDE SEQUENCE [LARGE SCALE GENOMIC DNA]</scope>
    <source>
        <strain evidence="8">ANKA</strain>
    </source>
</reference>
<reference evidence="6" key="2">
    <citation type="journal article" date="2016" name="Mol. Pharmacol.">
        <title>Substrate and Inhibitor Specificity of the Plasmodium berghei Equilibrative Nucleoside Transporter Type 1.</title>
        <authorList>
            <person name="Arora A."/>
            <person name="Deniskin R."/>
            <person name="Sosa Y."/>
            <person name="Nishtala S.N."/>
            <person name="Henrich P.P."/>
            <person name="Kumar T.R."/>
            <person name="Fidock D.A."/>
            <person name="Akabas M.H."/>
        </authorList>
    </citation>
    <scope>FUNCTION</scope>
    <scope>TRANSPORTER ACTIVITY</scope>
</reference>